<accession>Q13011</accession>
<accession>A8K745</accession>
<accession>Q8WVX0</accession>
<accession>Q96EZ9</accession>
<protein>
    <recommendedName>
        <fullName evidence="8">Delta(3,5)-Delta(2,4)-dienoyl-CoA isomerase, mitochondrial</fullName>
        <ecNumber evidence="3">5.3.3.-</ecNumber>
    </recommendedName>
</protein>
<feature type="transit peptide" description="Mitochondrion" evidence="4">
    <location>
        <begin position="1"/>
        <end position="33"/>
    </location>
</feature>
<feature type="chain" id="PRO_0000007417" description="Delta(3,5)-Delta(2,4)-dienoyl-CoA isomerase, mitochondrial">
    <location>
        <begin position="34"/>
        <end position="328"/>
    </location>
</feature>
<feature type="short sequence motif" description="Microbody targeting signal" evidence="4">
    <location>
        <begin position="326"/>
        <end position="328"/>
    </location>
</feature>
<feature type="binding site" evidence="2">
    <location>
        <begin position="116"/>
        <end position="120"/>
    </location>
    <ligand>
        <name>substrate</name>
    </ligand>
</feature>
<feature type="binding site" evidence="2">
    <location>
        <position position="174"/>
    </location>
    <ligand>
        <name>substrate</name>
    </ligand>
</feature>
<feature type="site" description="Important for catalytic activity" evidence="2">
    <location>
        <position position="197"/>
    </location>
</feature>
<feature type="site" description="Important for catalytic activity" evidence="3">
    <location>
        <position position="205"/>
    </location>
</feature>
<feature type="modified residue" description="N6-succinyllysine" evidence="1">
    <location>
        <position position="231"/>
    </location>
</feature>
<feature type="modified residue" description="Phosphoserine" evidence="11">
    <location>
        <position position="268"/>
    </location>
</feature>
<feature type="modified residue" description="N6-acetyllysine" evidence="10">
    <location>
        <position position="327"/>
    </location>
</feature>
<feature type="sequence variant" id="VAR_014927" description="In dbSNP:rs9419." evidence="5 6 7 11">
    <original>E</original>
    <variation>A</variation>
    <location>
        <position position="41"/>
    </location>
</feature>
<feature type="sequence variant" id="VAR_033913" description="In dbSNP:rs2229259.">
    <original>G</original>
    <variation>R</variation>
    <location>
        <position position="217"/>
    </location>
</feature>
<feature type="sequence conflict" description="In Ref. 1; AAC50222 and 2; AAB86485." evidence="8" ref="1 2">
    <original>Q</original>
    <variation>E</variation>
    <location>
        <position position="210"/>
    </location>
</feature>
<feature type="sequence conflict" description="In Ref. 1; AAC50222 and 2; AAB86485." evidence="8" ref="1 2">
    <original>R</original>
    <variation>H</variation>
    <location>
        <position position="230"/>
    </location>
</feature>
<feature type="sequence conflict" description="In Ref. 1; AAC50222 and 2; AAB86485." evidence="8" ref="1 2">
    <original>G</original>
    <variation>D</variation>
    <location>
        <position position="239"/>
    </location>
</feature>
<feature type="sequence conflict" description="In Ref. 1; AAC50222 and 2; AAB86485." evidence="8" ref="1 2">
    <original>A</original>
    <variation>P</variation>
    <location>
        <position position="259"/>
    </location>
</feature>
<feature type="sequence conflict" description="In Ref. 1; AAC50222 and 2; AAB86485." evidence="8" ref="1 2">
    <original>A</original>
    <variation>P</variation>
    <location>
        <position position="262"/>
    </location>
</feature>
<feature type="sequence conflict" description="In Ref. 1; AAC50222 and 2; AAB86485." evidence="8" ref="1 2">
    <original>SPVA</original>
    <variation>TTVL</variation>
    <location>
        <begin position="268"/>
        <end position="271"/>
    </location>
</feature>
<feature type="sequence conflict" description="In Ref. 1; AAC50222 and 2; AAB86485." evidence="8" ref="1 2">
    <original>A</original>
    <variation>P</variation>
    <location>
        <position position="313"/>
    </location>
</feature>
<feature type="strand" evidence="12">
    <location>
        <begin position="56"/>
        <end position="62"/>
    </location>
</feature>
<feature type="strand" evidence="12">
    <location>
        <begin position="64"/>
        <end position="72"/>
    </location>
</feature>
<feature type="helix" evidence="12">
    <location>
        <begin position="75"/>
        <end position="77"/>
    </location>
</feature>
<feature type="helix" evidence="12">
    <location>
        <begin position="83"/>
        <end position="97"/>
    </location>
</feature>
<feature type="strand" evidence="12">
    <location>
        <begin position="104"/>
        <end position="110"/>
    </location>
</feature>
<feature type="strand" evidence="13">
    <location>
        <begin position="111"/>
        <end position="115"/>
    </location>
</feature>
<feature type="helix" evidence="12">
    <location>
        <begin position="120"/>
        <end position="128"/>
    </location>
</feature>
<feature type="strand" evidence="12">
    <location>
        <begin position="132"/>
        <end position="134"/>
    </location>
</feature>
<feature type="helix" evidence="12">
    <location>
        <begin position="135"/>
        <end position="158"/>
    </location>
</feature>
<feature type="strand" evidence="12">
    <location>
        <begin position="159"/>
        <end position="161"/>
    </location>
</feature>
<feature type="strand" evidence="12">
    <location>
        <begin position="163"/>
        <end position="167"/>
    </location>
</feature>
<feature type="strand" evidence="12">
    <location>
        <begin position="169"/>
        <end position="172"/>
    </location>
</feature>
<feature type="helix" evidence="12">
    <location>
        <begin position="174"/>
        <end position="179"/>
    </location>
</feature>
<feature type="strand" evidence="12">
    <location>
        <begin position="182"/>
        <end position="188"/>
    </location>
</feature>
<feature type="strand" evidence="12">
    <location>
        <begin position="192"/>
        <end position="194"/>
    </location>
</feature>
<feature type="helix" evidence="12">
    <location>
        <begin position="197"/>
        <end position="199"/>
    </location>
</feature>
<feature type="helix" evidence="12">
    <location>
        <begin position="208"/>
        <end position="215"/>
    </location>
</feature>
<feature type="helix" evidence="12">
    <location>
        <begin position="219"/>
        <end position="228"/>
    </location>
</feature>
<feature type="strand" evidence="12">
    <location>
        <begin position="231"/>
        <end position="233"/>
    </location>
</feature>
<feature type="helix" evidence="12">
    <location>
        <begin position="234"/>
        <end position="239"/>
    </location>
</feature>
<feature type="strand" evidence="12">
    <location>
        <begin position="242"/>
        <end position="249"/>
    </location>
</feature>
<feature type="helix" evidence="12">
    <location>
        <begin position="250"/>
        <end position="265"/>
    </location>
</feature>
<feature type="helix" evidence="12">
    <location>
        <begin position="269"/>
        <end position="284"/>
    </location>
</feature>
<feature type="helix" evidence="12">
    <location>
        <begin position="287"/>
        <end position="301"/>
    </location>
</feature>
<feature type="helix" evidence="12">
    <location>
        <begin position="305"/>
        <end position="313"/>
    </location>
</feature>
<feature type="turn" evidence="13">
    <location>
        <begin position="320"/>
        <end position="322"/>
    </location>
</feature>
<dbReference type="EC" id="5.3.3.-" evidence="3"/>
<dbReference type="EMBL" id="U16660">
    <property type="protein sequence ID" value="AAC50222.1"/>
    <property type="molecule type" value="mRNA"/>
</dbReference>
<dbReference type="EMBL" id="AF030249">
    <property type="protein sequence ID" value="AAB86485.1"/>
    <property type="molecule type" value="Genomic_DNA"/>
</dbReference>
<dbReference type="EMBL" id="AF030246">
    <property type="protein sequence ID" value="AAB86485.1"/>
    <property type="status" value="JOINED"/>
    <property type="molecule type" value="Genomic_DNA"/>
</dbReference>
<dbReference type="EMBL" id="AF030247">
    <property type="protein sequence ID" value="AAB86485.1"/>
    <property type="status" value="JOINED"/>
    <property type="molecule type" value="Genomic_DNA"/>
</dbReference>
<dbReference type="EMBL" id="AF030248">
    <property type="protein sequence ID" value="AAB86485.1"/>
    <property type="status" value="JOINED"/>
    <property type="molecule type" value="Genomic_DNA"/>
</dbReference>
<dbReference type="EMBL" id="AK291860">
    <property type="protein sequence ID" value="BAF84549.1"/>
    <property type="molecule type" value="mRNA"/>
</dbReference>
<dbReference type="EMBL" id="CH471126">
    <property type="protein sequence ID" value="EAW56824.1"/>
    <property type="molecule type" value="Genomic_DNA"/>
</dbReference>
<dbReference type="EMBL" id="BC011792">
    <property type="protein sequence ID" value="AAH11792.1"/>
    <property type="molecule type" value="mRNA"/>
</dbReference>
<dbReference type="EMBL" id="BC017408">
    <property type="protein sequence ID" value="AAH17408.1"/>
    <property type="molecule type" value="mRNA"/>
</dbReference>
<dbReference type="CCDS" id="CCDS33014.1"/>
<dbReference type="PIR" id="I38882">
    <property type="entry name" value="I38882"/>
</dbReference>
<dbReference type="RefSeq" id="NP_001389.2">
    <property type="nucleotide sequence ID" value="NM_001398.3"/>
</dbReference>
<dbReference type="PDB" id="2VRE">
    <property type="method" value="X-ray"/>
    <property type="resolution" value="1.95 A"/>
    <property type="chains" value="A/B/C=50-322"/>
</dbReference>
<dbReference type="PDB" id="8SK6">
    <property type="method" value="EM"/>
    <property type="resolution" value="2.96 A"/>
    <property type="chains" value="A/B/C/D/E/F=1-328"/>
</dbReference>
<dbReference type="PDBsum" id="2VRE"/>
<dbReference type="PDBsum" id="8SK6"/>
<dbReference type="EMDB" id="EMD-40556"/>
<dbReference type="SMR" id="Q13011"/>
<dbReference type="BioGRID" id="108220">
    <property type="interactions" value="227"/>
</dbReference>
<dbReference type="FunCoup" id="Q13011">
    <property type="interactions" value="1434"/>
</dbReference>
<dbReference type="IntAct" id="Q13011">
    <property type="interactions" value="203"/>
</dbReference>
<dbReference type="MINT" id="Q13011"/>
<dbReference type="STRING" id="9606.ENSP00000221418"/>
<dbReference type="ChEMBL" id="CHEMBL4523284"/>
<dbReference type="GlyGen" id="Q13011">
    <property type="glycosylation" value="1 site, 1 O-linked glycan (1 site)"/>
</dbReference>
<dbReference type="iPTMnet" id="Q13011"/>
<dbReference type="MetOSite" id="Q13011"/>
<dbReference type="PhosphoSitePlus" id="Q13011"/>
<dbReference type="SwissPalm" id="Q13011"/>
<dbReference type="BioMuta" id="ECH1"/>
<dbReference type="DMDM" id="82654933"/>
<dbReference type="REPRODUCTION-2DPAGE" id="IPI00011416"/>
<dbReference type="jPOST" id="Q13011"/>
<dbReference type="MassIVE" id="Q13011"/>
<dbReference type="PaxDb" id="9606-ENSP00000221418"/>
<dbReference type="PeptideAtlas" id="Q13011"/>
<dbReference type="ProteomicsDB" id="59100"/>
<dbReference type="Pumba" id="Q13011"/>
<dbReference type="TopDownProteomics" id="Q13011"/>
<dbReference type="Antibodypedia" id="1042">
    <property type="antibodies" value="277 antibodies from 30 providers"/>
</dbReference>
<dbReference type="DNASU" id="1891"/>
<dbReference type="Ensembl" id="ENST00000221418.9">
    <property type="protein sequence ID" value="ENSP00000221418.3"/>
    <property type="gene ID" value="ENSG00000104823.9"/>
</dbReference>
<dbReference type="Ensembl" id="ENST00000634245.2">
    <property type="protein sequence ID" value="ENSP00000489530.1"/>
    <property type="gene ID" value="ENSG00000282853.2"/>
</dbReference>
<dbReference type="GeneID" id="1891"/>
<dbReference type="KEGG" id="hsa:1891"/>
<dbReference type="MANE-Select" id="ENST00000221418.9">
    <property type="protein sequence ID" value="ENSP00000221418.3"/>
    <property type="RefSeq nucleotide sequence ID" value="NM_001398.3"/>
    <property type="RefSeq protein sequence ID" value="NP_001389.2"/>
</dbReference>
<dbReference type="UCSC" id="uc002oji.4">
    <property type="organism name" value="human"/>
</dbReference>
<dbReference type="AGR" id="HGNC:3149"/>
<dbReference type="CTD" id="1891"/>
<dbReference type="DisGeNET" id="1891"/>
<dbReference type="GeneCards" id="ECH1"/>
<dbReference type="HGNC" id="HGNC:3149">
    <property type="gene designation" value="ECH1"/>
</dbReference>
<dbReference type="HPA" id="ENSG00000104823">
    <property type="expression patterns" value="Tissue enhanced (skeletal)"/>
</dbReference>
<dbReference type="MalaCards" id="ECH1"/>
<dbReference type="MIM" id="600696">
    <property type="type" value="gene"/>
</dbReference>
<dbReference type="neXtProt" id="NX_Q13011"/>
<dbReference type="OpenTargets" id="ENSG00000104823"/>
<dbReference type="PharmGKB" id="PA27596"/>
<dbReference type="VEuPathDB" id="HostDB:ENSG00000104823"/>
<dbReference type="eggNOG" id="KOG1681">
    <property type="taxonomic scope" value="Eukaryota"/>
</dbReference>
<dbReference type="GeneTree" id="ENSGT00940000159610"/>
<dbReference type="InParanoid" id="Q13011"/>
<dbReference type="OMA" id="QYVAHVE"/>
<dbReference type="OrthoDB" id="14970at2759"/>
<dbReference type="PAN-GO" id="Q13011">
    <property type="GO annotations" value="2 GO annotations based on evolutionary models"/>
</dbReference>
<dbReference type="PhylomeDB" id="Q13011"/>
<dbReference type="TreeFam" id="TF314317"/>
<dbReference type="PathwayCommons" id="Q13011"/>
<dbReference type="Reactome" id="R-HSA-9033241">
    <property type="pathway name" value="Peroxisomal protein import"/>
</dbReference>
<dbReference type="Reactome" id="R-HSA-9837999">
    <property type="pathway name" value="Mitochondrial protein degradation"/>
</dbReference>
<dbReference type="SignaLink" id="Q13011"/>
<dbReference type="UniPathway" id="UPA00659"/>
<dbReference type="BioGRID-ORCS" id="1891">
    <property type="hits" value="15 hits in 1161 CRISPR screens"/>
</dbReference>
<dbReference type="ChiTaRS" id="ECH1">
    <property type="organism name" value="human"/>
</dbReference>
<dbReference type="EvolutionaryTrace" id="Q13011"/>
<dbReference type="GeneWiki" id="ECH1"/>
<dbReference type="GenomeRNAi" id="1891"/>
<dbReference type="Pharos" id="Q13011">
    <property type="development level" value="Tbio"/>
</dbReference>
<dbReference type="PRO" id="PR:Q13011"/>
<dbReference type="Proteomes" id="UP000005640">
    <property type="component" value="Chromosome 19"/>
</dbReference>
<dbReference type="RNAct" id="Q13011">
    <property type="molecule type" value="protein"/>
</dbReference>
<dbReference type="Bgee" id="ENSG00000104823">
    <property type="expression patterns" value="Expressed in apex of heart and 102 other cell types or tissues"/>
</dbReference>
<dbReference type="ExpressionAtlas" id="Q13011">
    <property type="expression patterns" value="baseline and differential"/>
</dbReference>
<dbReference type="GO" id="GO:0005829">
    <property type="term" value="C:cytosol"/>
    <property type="evidence" value="ECO:0000304"/>
    <property type="project" value="Reactome"/>
</dbReference>
<dbReference type="GO" id="GO:0070062">
    <property type="term" value="C:extracellular exosome"/>
    <property type="evidence" value="ECO:0007005"/>
    <property type="project" value="UniProtKB"/>
</dbReference>
<dbReference type="GO" id="GO:0016020">
    <property type="term" value="C:membrane"/>
    <property type="evidence" value="ECO:0007005"/>
    <property type="project" value="UniProtKB"/>
</dbReference>
<dbReference type="GO" id="GO:0005759">
    <property type="term" value="C:mitochondrial matrix"/>
    <property type="evidence" value="ECO:0000304"/>
    <property type="project" value="Reactome"/>
</dbReference>
<dbReference type="GO" id="GO:0005739">
    <property type="term" value="C:mitochondrion"/>
    <property type="evidence" value="ECO:0006056"/>
    <property type="project" value="FlyBase"/>
</dbReference>
<dbReference type="GO" id="GO:0005782">
    <property type="term" value="C:peroxisomal matrix"/>
    <property type="evidence" value="ECO:0000304"/>
    <property type="project" value="Reactome"/>
</dbReference>
<dbReference type="GO" id="GO:0005777">
    <property type="term" value="C:peroxisome"/>
    <property type="evidence" value="ECO:0000303"/>
    <property type="project" value="UniProtKB"/>
</dbReference>
<dbReference type="GO" id="GO:0051750">
    <property type="term" value="F:delta(3,5)-delta(2,4)-dienoyl-CoA isomerase activity"/>
    <property type="evidence" value="ECO:0000318"/>
    <property type="project" value="GO_Central"/>
</dbReference>
<dbReference type="GO" id="GO:0006635">
    <property type="term" value="P:fatty acid beta-oxidation"/>
    <property type="evidence" value="ECO:0007669"/>
    <property type="project" value="UniProtKB-UniPathway"/>
</dbReference>
<dbReference type="CDD" id="cd06558">
    <property type="entry name" value="crotonase-like"/>
    <property type="match status" value="1"/>
</dbReference>
<dbReference type="FunFam" id="1.10.12.10:FF:000004">
    <property type="entry name" value="Delta3,5-delta2,4-dienoyl-CoA isomerase"/>
    <property type="match status" value="1"/>
</dbReference>
<dbReference type="FunFam" id="3.90.226.10:FF:000024">
    <property type="entry name" value="Delta3,5-delta2,4-dienoyl-CoA isomerase"/>
    <property type="match status" value="1"/>
</dbReference>
<dbReference type="Gene3D" id="3.90.226.10">
    <property type="entry name" value="2-enoyl-CoA Hydratase, Chain A, domain 1"/>
    <property type="match status" value="1"/>
</dbReference>
<dbReference type="Gene3D" id="1.10.12.10">
    <property type="entry name" value="Lyase 2-enoyl-coa Hydratase, Chain A, domain 2"/>
    <property type="match status" value="1"/>
</dbReference>
<dbReference type="InterPro" id="IPR029045">
    <property type="entry name" value="ClpP/crotonase-like_dom_sf"/>
</dbReference>
<dbReference type="InterPro" id="IPR045002">
    <property type="entry name" value="Ech1-like"/>
</dbReference>
<dbReference type="InterPro" id="IPR018376">
    <property type="entry name" value="Enoyl-CoA_hyd/isom_CS"/>
</dbReference>
<dbReference type="InterPro" id="IPR001753">
    <property type="entry name" value="Enoyl-CoA_hydra/iso"/>
</dbReference>
<dbReference type="InterPro" id="IPR014748">
    <property type="entry name" value="Enoyl-CoA_hydra_C"/>
</dbReference>
<dbReference type="NCBIfam" id="NF004794">
    <property type="entry name" value="PRK06142.1"/>
    <property type="match status" value="1"/>
</dbReference>
<dbReference type="PANTHER" id="PTHR43149:SF1">
    <property type="entry name" value="DELTA(3,5)-DELTA(2,4)-DIENOYL-COA ISOMERASE, MITOCHONDRIAL"/>
    <property type="match status" value="1"/>
</dbReference>
<dbReference type="PANTHER" id="PTHR43149">
    <property type="entry name" value="ENOYL-COA HYDRATASE"/>
    <property type="match status" value="1"/>
</dbReference>
<dbReference type="Pfam" id="PF00378">
    <property type="entry name" value="ECH_1"/>
    <property type="match status" value="1"/>
</dbReference>
<dbReference type="SUPFAM" id="SSF52096">
    <property type="entry name" value="ClpP/crotonase"/>
    <property type="match status" value="1"/>
</dbReference>
<dbReference type="PROSITE" id="PS00166">
    <property type="entry name" value="ENOYL_COA_HYDRATASE"/>
    <property type="match status" value="1"/>
</dbReference>
<sequence>MAAGIVASRRLRDLLTRRLTGSNYPGLSISLRLTGSSAQEEASGVALGEAPDHSYESLRVTSAQKHVLHVQLNRPNKRNAMNKVFWREMVECFNKISRDADCRAVVISGAGKMFTAGIDLMDMASDILQPKGDDVARISWYLRDIITRYQETFNVIERCPKPVIAAVHGGCIGGGVDLVTACDIRYCAQDAFFQVKEVDVGLAADVGTLQRLPKVIGNQSLVNELAFTARKMMADEALGSGLVSRVFPDKEVMLDAALALAAEISSKSPVAVQSTKVNLLYSRDHSVAESLNYVASWNMSMLQTQDLVKSVQATTENKELKTVTFSKL</sequence>
<reference key="1">
    <citation type="journal article" date="1995" name="Genomics">
        <title>Isolation and characterization of rat and human cDNAs encoding a novel putative peroxisomal enoyl-CoA hydratase.</title>
        <authorList>
            <person name="Fitzpatrick D.R."/>
            <person name="Germain-Lee E."/>
            <person name="Valle D."/>
        </authorList>
    </citation>
    <scope>NUCLEOTIDE SEQUENCE [MRNA]</scope>
    <source>
        <tissue>Retina</tissue>
    </source>
</reference>
<reference key="2">
    <citation type="submission" date="1997-11" db="EMBL/GenBank/DDBJ databases">
        <title>Genomic structure of human ECH1.</title>
        <authorList>
            <person name="Fitzpatrick D.R."/>
            <person name="Valle D."/>
        </authorList>
    </citation>
    <scope>NUCLEOTIDE SEQUENCE [GENOMIC DNA]</scope>
</reference>
<reference key="3">
    <citation type="journal article" date="2004" name="Nat. Genet.">
        <title>Complete sequencing and characterization of 21,243 full-length human cDNAs.</title>
        <authorList>
            <person name="Ota T."/>
            <person name="Suzuki Y."/>
            <person name="Nishikawa T."/>
            <person name="Otsuki T."/>
            <person name="Sugiyama T."/>
            <person name="Irie R."/>
            <person name="Wakamatsu A."/>
            <person name="Hayashi K."/>
            <person name="Sato H."/>
            <person name="Nagai K."/>
            <person name="Kimura K."/>
            <person name="Makita H."/>
            <person name="Sekine M."/>
            <person name="Obayashi M."/>
            <person name="Nishi T."/>
            <person name="Shibahara T."/>
            <person name="Tanaka T."/>
            <person name="Ishii S."/>
            <person name="Yamamoto J."/>
            <person name="Saito K."/>
            <person name="Kawai Y."/>
            <person name="Isono Y."/>
            <person name="Nakamura Y."/>
            <person name="Nagahari K."/>
            <person name="Murakami K."/>
            <person name="Yasuda T."/>
            <person name="Iwayanagi T."/>
            <person name="Wagatsuma M."/>
            <person name="Shiratori A."/>
            <person name="Sudo H."/>
            <person name="Hosoiri T."/>
            <person name="Kaku Y."/>
            <person name="Kodaira H."/>
            <person name="Kondo H."/>
            <person name="Sugawara M."/>
            <person name="Takahashi M."/>
            <person name="Kanda K."/>
            <person name="Yokoi T."/>
            <person name="Furuya T."/>
            <person name="Kikkawa E."/>
            <person name="Omura Y."/>
            <person name="Abe K."/>
            <person name="Kamihara K."/>
            <person name="Katsuta N."/>
            <person name="Sato K."/>
            <person name="Tanikawa M."/>
            <person name="Yamazaki M."/>
            <person name="Ninomiya K."/>
            <person name="Ishibashi T."/>
            <person name="Yamashita H."/>
            <person name="Murakawa K."/>
            <person name="Fujimori K."/>
            <person name="Tanai H."/>
            <person name="Kimata M."/>
            <person name="Watanabe M."/>
            <person name="Hiraoka S."/>
            <person name="Chiba Y."/>
            <person name="Ishida S."/>
            <person name="Ono Y."/>
            <person name="Takiguchi S."/>
            <person name="Watanabe S."/>
            <person name="Yosida M."/>
            <person name="Hotuta T."/>
            <person name="Kusano J."/>
            <person name="Kanehori K."/>
            <person name="Takahashi-Fujii A."/>
            <person name="Hara H."/>
            <person name="Tanase T.-O."/>
            <person name="Nomura Y."/>
            <person name="Togiya S."/>
            <person name="Komai F."/>
            <person name="Hara R."/>
            <person name="Takeuchi K."/>
            <person name="Arita M."/>
            <person name="Imose N."/>
            <person name="Musashino K."/>
            <person name="Yuuki H."/>
            <person name="Oshima A."/>
            <person name="Sasaki N."/>
            <person name="Aotsuka S."/>
            <person name="Yoshikawa Y."/>
            <person name="Matsunawa H."/>
            <person name="Ichihara T."/>
            <person name="Shiohata N."/>
            <person name="Sano S."/>
            <person name="Moriya S."/>
            <person name="Momiyama H."/>
            <person name="Satoh N."/>
            <person name="Takami S."/>
            <person name="Terashima Y."/>
            <person name="Suzuki O."/>
            <person name="Nakagawa S."/>
            <person name="Senoh A."/>
            <person name="Mizoguchi H."/>
            <person name="Goto Y."/>
            <person name="Shimizu F."/>
            <person name="Wakebe H."/>
            <person name="Hishigaki H."/>
            <person name="Watanabe T."/>
            <person name="Sugiyama A."/>
            <person name="Takemoto M."/>
            <person name="Kawakami B."/>
            <person name="Yamazaki M."/>
            <person name="Watanabe K."/>
            <person name="Kumagai A."/>
            <person name="Itakura S."/>
            <person name="Fukuzumi Y."/>
            <person name="Fujimori Y."/>
            <person name="Komiyama M."/>
            <person name="Tashiro H."/>
            <person name="Tanigami A."/>
            <person name="Fujiwara T."/>
            <person name="Ono T."/>
            <person name="Yamada K."/>
            <person name="Fujii Y."/>
            <person name="Ozaki K."/>
            <person name="Hirao M."/>
            <person name="Ohmori Y."/>
            <person name="Kawabata A."/>
            <person name="Hikiji T."/>
            <person name="Kobatake N."/>
            <person name="Inagaki H."/>
            <person name="Ikema Y."/>
            <person name="Okamoto S."/>
            <person name="Okitani R."/>
            <person name="Kawakami T."/>
            <person name="Noguchi S."/>
            <person name="Itoh T."/>
            <person name="Shigeta K."/>
            <person name="Senba T."/>
            <person name="Matsumura K."/>
            <person name="Nakajima Y."/>
            <person name="Mizuno T."/>
            <person name="Morinaga M."/>
            <person name="Sasaki M."/>
            <person name="Togashi T."/>
            <person name="Oyama M."/>
            <person name="Hata H."/>
            <person name="Watanabe M."/>
            <person name="Komatsu T."/>
            <person name="Mizushima-Sugano J."/>
            <person name="Satoh T."/>
            <person name="Shirai Y."/>
            <person name="Takahashi Y."/>
            <person name="Nakagawa K."/>
            <person name="Okumura K."/>
            <person name="Nagase T."/>
            <person name="Nomura N."/>
            <person name="Kikuchi H."/>
            <person name="Masuho Y."/>
            <person name="Yamashita R."/>
            <person name="Nakai K."/>
            <person name="Yada T."/>
            <person name="Nakamura Y."/>
            <person name="Ohara O."/>
            <person name="Isogai T."/>
            <person name="Sugano S."/>
        </authorList>
    </citation>
    <scope>NUCLEOTIDE SEQUENCE [LARGE SCALE MRNA]</scope>
    <scope>VARIANT ALA-41</scope>
    <source>
        <tissue>Skeletal muscle</tissue>
    </source>
</reference>
<reference key="4">
    <citation type="submission" date="2005-07" db="EMBL/GenBank/DDBJ databases">
        <authorList>
            <person name="Mural R.J."/>
            <person name="Istrail S."/>
            <person name="Sutton G.G."/>
            <person name="Florea L."/>
            <person name="Halpern A.L."/>
            <person name="Mobarry C.M."/>
            <person name="Lippert R."/>
            <person name="Walenz B."/>
            <person name="Shatkay H."/>
            <person name="Dew I."/>
            <person name="Miller J.R."/>
            <person name="Flanigan M.J."/>
            <person name="Edwards N.J."/>
            <person name="Bolanos R."/>
            <person name="Fasulo D."/>
            <person name="Halldorsson B.V."/>
            <person name="Hannenhalli S."/>
            <person name="Turner R."/>
            <person name="Yooseph S."/>
            <person name="Lu F."/>
            <person name="Nusskern D.R."/>
            <person name="Shue B.C."/>
            <person name="Zheng X.H."/>
            <person name="Zhong F."/>
            <person name="Delcher A.L."/>
            <person name="Huson D.H."/>
            <person name="Kravitz S.A."/>
            <person name="Mouchard L."/>
            <person name="Reinert K."/>
            <person name="Remington K.A."/>
            <person name="Clark A.G."/>
            <person name="Waterman M.S."/>
            <person name="Eichler E.E."/>
            <person name="Adams M.D."/>
            <person name="Hunkapiller M.W."/>
            <person name="Myers E.W."/>
            <person name="Venter J.C."/>
        </authorList>
    </citation>
    <scope>NUCLEOTIDE SEQUENCE [LARGE SCALE GENOMIC DNA]</scope>
    <scope>VARIANT ALA-41</scope>
</reference>
<reference key="5">
    <citation type="journal article" date="2004" name="Genome Res.">
        <title>The status, quality, and expansion of the NIH full-length cDNA project: the Mammalian Gene Collection (MGC).</title>
        <authorList>
            <consortium name="The MGC Project Team"/>
        </authorList>
    </citation>
    <scope>NUCLEOTIDE SEQUENCE [LARGE SCALE MRNA]</scope>
    <scope>VARIANT ALA-41</scope>
    <source>
        <tissue>Melanoma</tissue>
        <tissue>Pancreatic carcinoma</tissue>
    </source>
</reference>
<reference key="6">
    <citation type="submission" date="2005-11" db="UniProtKB">
        <authorList>
            <person name="Bienvenut W.V."/>
            <person name="Claeys D."/>
        </authorList>
    </citation>
    <scope>PROTEIN SEQUENCE OF 149-158 AND 215-230</scope>
    <scope>IDENTIFICATION BY MASS SPECTROMETRY</scope>
    <source>
        <tissue>Platelet</tissue>
    </source>
</reference>
<reference key="7">
    <citation type="submission" date="2008-12" db="UniProtKB">
        <authorList>
            <person name="Lubec G."/>
            <person name="Afjehi-Sadat L."/>
            <person name="Chen W.-Q."/>
            <person name="Sun Y."/>
        </authorList>
    </citation>
    <scope>PROTEIN SEQUENCE OF 66-77; 113-131; 149-211; 215-230 AND 232-245</scope>
    <scope>IDENTIFICATION BY MASS SPECTROMETRY</scope>
    <source>
        <tissue>Brain</tissue>
        <tissue>Cajal-Retzius cell</tissue>
        <tissue>Fetal brain cortex</tissue>
    </source>
</reference>
<reference key="8">
    <citation type="journal article" date="2009" name="Science">
        <title>Lysine acetylation targets protein complexes and co-regulates major cellular functions.</title>
        <authorList>
            <person name="Choudhary C."/>
            <person name="Kumar C."/>
            <person name="Gnad F."/>
            <person name="Nielsen M.L."/>
            <person name="Rehman M."/>
            <person name="Walther T.C."/>
            <person name="Olsen J.V."/>
            <person name="Mann M."/>
        </authorList>
    </citation>
    <scope>ACETYLATION [LARGE SCALE ANALYSIS] AT LYS-327</scope>
    <scope>IDENTIFICATION BY MASS SPECTROMETRY [LARGE SCALE ANALYSIS]</scope>
</reference>
<reference key="9">
    <citation type="journal article" date="2011" name="BMC Syst. Biol.">
        <title>Initial characterization of the human central proteome.</title>
        <authorList>
            <person name="Burkard T.R."/>
            <person name="Planyavsky M."/>
            <person name="Kaupe I."/>
            <person name="Breitwieser F.P."/>
            <person name="Buerckstuemmer T."/>
            <person name="Bennett K.L."/>
            <person name="Superti-Furga G."/>
            <person name="Colinge J."/>
        </authorList>
    </citation>
    <scope>IDENTIFICATION BY MASS SPECTROMETRY [LARGE SCALE ANALYSIS]</scope>
</reference>
<reference key="10">
    <citation type="journal article" date="2012" name="J. Proteome Res.">
        <title>Resveratrol-induced changes of the human adipocyte secretion profile.</title>
        <authorList>
            <person name="Rosenow A."/>
            <person name="Noben J.P."/>
            <person name="Jocken J."/>
            <person name="Kallendrusch S."/>
            <person name="Fischer-Posovszky P."/>
            <person name="Mariman E.C."/>
            <person name="Renes J."/>
        </authorList>
    </citation>
    <scope>IDENTIFICATION BY MASS SPECTROMETRY [LARGE SCALE ANALYSIS]</scope>
</reference>
<reference key="11">
    <citation type="journal article" date="2014" name="J. Proteomics">
        <title>An enzyme assisted RP-RPLC approach for in-depth analysis of human liver phosphoproteome.</title>
        <authorList>
            <person name="Bian Y."/>
            <person name="Song C."/>
            <person name="Cheng K."/>
            <person name="Dong M."/>
            <person name="Wang F."/>
            <person name="Huang J."/>
            <person name="Sun D."/>
            <person name="Wang L."/>
            <person name="Ye M."/>
            <person name="Zou H."/>
        </authorList>
    </citation>
    <scope>PHOSPHORYLATION [LARGE SCALE ANALYSIS] AT SER-268</scope>
    <scope>VARIANT [LARGE SCALE ANALYSIS] ALA-41</scope>
    <scope>IDENTIFICATION BY MASS SPECTROMETRY [LARGE SCALE ANALYSIS]</scope>
    <source>
        <tissue>Liver</tissue>
    </source>
</reference>
<reference key="12">
    <citation type="journal article" date="2015" name="Proteomics">
        <title>N-terminome analysis of the human mitochondrial proteome.</title>
        <authorList>
            <person name="Vaca Jacome A.S."/>
            <person name="Rabilloud T."/>
            <person name="Schaeffer-Reiss C."/>
            <person name="Rompais M."/>
            <person name="Ayoub D."/>
            <person name="Lane L."/>
            <person name="Bairoch A."/>
            <person name="Van Dorsselaer A."/>
            <person name="Carapito C."/>
        </authorList>
    </citation>
    <scope>IDENTIFICATION BY MASS SPECTROMETRY [LARGE SCALE ANALYSIS]</scope>
</reference>
<reference key="13">
    <citation type="submission" date="2009-02" db="PDB data bank">
        <title>Crystal structure of human peroxisomal delta3,5,delta2,4-dienoyl CoA isomerase (ECH1).</title>
        <authorList>
            <consortium name="Structural genomics consortium (SGC)"/>
        </authorList>
    </citation>
    <scope>X-RAY CRYSTALLOGRAPHY (1.95 ANGSTROMS) OF 50-322</scope>
</reference>
<keyword id="KW-0002">3D-structure</keyword>
<keyword id="KW-0007">Acetylation</keyword>
<keyword id="KW-0903">Direct protein sequencing</keyword>
<keyword id="KW-0276">Fatty acid metabolism</keyword>
<keyword id="KW-0413">Isomerase</keyword>
<keyword id="KW-0443">Lipid metabolism</keyword>
<keyword id="KW-0496">Mitochondrion</keyword>
<keyword id="KW-0576">Peroxisome</keyword>
<keyword id="KW-0597">Phosphoprotein</keyword>
<keyword id="KW-1267">Proteomics identification</keyword>
<keyword id="KW-1185">Reference proteome</keyword>
<keyword id="KW-0809">Transit peptide</keyword>
<evidence type="ECO:0000250" key="1">
    <source>
        <dbReference type="UniProtKB" id="O35459"/>
    </source>
</evidence>
<evidence type="ECO:0000250" key="2">
    <source>
        <dbReference type="UniProtKB" id="P42126"/>
    </source>
</evidence>
<evidence type="ECO:0000250" key="3">
    <source>
        <dbReference type="UniProtKB" id="Q62651"/>
    </source>
</evidence>
<evidence type="ECO:0000255" key="4"/>
<evidence type="ECO:0000269" key="5">
    <source>
    </source>
</evidence>
<evidence type="ECO:0000269" key="6">
    <source>
    </source>
</evidence>
<evidence type="ECO:0000269" key="7">
    <source ref="4"/>
</evidence>
<evidence type="ECO:0000305" key="8"/>
<evidence type="ECO:0000312" key="9">
    <source>
        <dbReference type="HGNC" id="HGNC:3149"/>
    </source>
</evidence>
<evidence type="ECO:0007744" key="10">
    <source>
    </source>
</evidence>
<evidence type="ECO:0007744" key="11">
    <source>
    </source>
</evidence>
<evidence type="ECO:0007829" key="12">
    <source>
        <dbReference type="PDB" id="2VRE"/>
    </source>
</evidence>
<evidence type="ECO:0007829" key="13">
    <source>
        <dbReference type="PDB" id="8SK6"/>
    </source>
</evidence>
<organism>
    <name type="scientific">Homo sapiens</name>
    <name type="common">Human</name>
    <dbReference type="NCBI Taxonomy" id="9606"/>
    <lineage>
        <taxon>Eukaryota</taxon>
        <taxon>Metazoa</taxon>
        <taxon>Chordata</taxon>
        <taxon>Craniata</taxon>
        <taxon>Vertebrata</taxon>
        <taxon>Euteleostomi</taxon>
        <taxon>Mammalia</taxon>
        <taxon>Eutheria</taxon>
        <taxon>Euarchontoglires</taxon>
        <taxon>Primates</taxon>
        <taxon>Haplorrhini</taxon>
        <taxon>Catarrhini</taxon>
        <taxon>Hominidae</taxon>
        <taxon>Homo</taxon>
    </lineage>
</organism>
<gene>
    <name evidence="9" type="primary">ECH1</name>
</gene>
<name>ECH1_HUMAN</name>
<comment type="function">
    <text evidence="3">Isomerization of 3-trans,5-cis-dienoyl-CoA to 2-trans,4-trans-dienoyl-CoA.</text>
</comment>
<comment type="catalytic activity">
    <reaction evidence="3">
        <text>(3E,5Z)-octadienoyl-CoA = (2E,4E)-octadienoyl-CoA</text>
        <dbReference type="Rhea" id="RHEA:45244"/>
        <dbReference type="ChEBI" id="CHEBI:62243"/>
        <dbReference type="ChEBI" id="CHEBI:85108"/>
    </reaction>
</comment>
<comment type="catalytic activity">
    <reaction evidence="3">
        <text>(3E,5Z,8Z,11Z,14Z)-eicosapentaenoyl-CoA = (2E,4E,8Z,11Z,14Z)-eicosapentaenoyl-CoA</text>
        <dbReference type="Rhea" id="RHEA:45224"/>
        <dbReference type="ChEBI" id="CHEBI:85090"/>
        <dbReference type="ChEBI" id="CHEBI:85091"/>
    </reaction>
</comment>
<comment type="pathway">
    <text evidence="3">Lipid metabolism; fatty acid beta-oxidation.</text>
</comment>
<comment type="subunit">
    <text evidence="3">Homohexamer.</text>
</comment>
<comment type="interaction">
    <interactant intactId="EBI-711968">
        <id>Q13011</id>
    </interactant>
    <interactant intactId="EBI-2512024">
        <id>O75521</id>
        <label>ECI2</label>
    </interactant>
    <organismsDiffer>false</organismsDiffer>
    <experiments>6</experiments>
</comment>
<comment type="interaction">
    <interactant intactId="EBI-711968">
        <id>Q13011</id>
    </interactant>
    <interactant intactId="EBI-10175124">
        <id>Q8IZU0</id>
        <label>FAM9B</label>
    </interactant>
    <organismsDiffer>false</organismsDiffer>
    <experiments>3</experiments>
</comment>
<comment type="interaction">
    <interactant intactId="EBI-711968">
        <id>Q13011</id>
    </interactant>
    <interactant intactId="EBI-466029">
        <id>P42858</id>
        <label>HTT</label>
    </interactant>
    <organismsDiffer>false</organismsDiffer>
    <experiments>2</experiments>
</comment>
<comment type="interaction">
    <interactant intactId="EBI-711968">
        <id>Q13011</id>
    </interactant>
    <interactant intactId="EBI-518675">
        <id>P40763</id>
        <label>STAT3</label>
    </interactant>
    <organismsDiffer>false</organismsDiffer>
    <experiments>2</experiments>
</comment>
<comment type="interaction">
    <interactant intactId="EBI-711968">
        <id>Q13011</id>
    </interactant>
    <interactant intactId="EBI-359224">
        <id>Q13077</id>
        <label>TRAF1</label>
    </interactant>
    <organismsDiffer>false</organismsDiffer>
    <experiments>4</experiments>
</comment>
<comment type="subcellular location">
    <subcellularLocation>
        <location evidence="3">Mitochondrion</location>
    </subcellularLocation>
    <subcellularLocation>
        <location evidence="3">Peroxisome</location>
    </subcellularLocation>
</comment>
<comment type="similarity">
    <text evidence="8">Belongs to the enoyl-CoA hydratase/isomerase family.</text>
</comment>
<proteinExistence type="evidence at protein level"/>